<reference key="1">
    <citation type="journal article" date="2000" name="J. Mol. Evol.">
        <title>Phylogenetic depth of the bacterial genera Aquifex and Thermotoga inferred from analysis of ribosomal protein, elongation factor, and RNA polymerase subunit sequences.</title>
        <authorList>
            <person name="Bocchetta M."/>
            <person name="Gribaldo S."/>
            <person name="Sanangelantoni A.M."/>
            <person name="Cammarano P."/>
        </authorList>
    </citation>
    <scope>NUCLEOTIDE SEQUENCE [GENOMIC DNA]</scope>
    <source>
        <strain>DSM 6858 / JCM 9492 / Kol5A</strain>
    </source>
</reference>
<organism>
    <name type="scientific">Aquifex pyrophilus</name>
    <dbReference type="NCBI Taxonomy" id="2714"/>
    <lineage>
        <taxon>Bacteria</taxon>
        <taxon>Pseudomonadati</taxon>
        <taxon>Aquificota</taxon>
        <taxon>Aquificia</taxon>
        <taxon>Aquificales</taxon>
        <taxon>Aquificaceae</taxon>
        <taxon>Aquifex</taxon>
    </lineage>
</organism>
<keyword id="KW-0687">Ribonucleoprotein</keyword>
<keyword id="KW-0689">Ribosomal protein</keyword>
<keyword id="KW-0694">RNA-binding</keyword>
<keyword id="KW-0699">rRNA-binding</keyword>
<dbReference type="EMBL" id="AF040101">
    <property type="protein sequence ID" value="AAD08798.1"/>
    <property type="status" value="ALT_FRAME"/>
    <property type="molecule type" value="Genomic_DNA"/>
</dbReference>
<dbReference type="SMR" id="Q9ZI38"/>
<dbReference type="GO" id="GO:0022625">
    <property type="term" value="C:cytosolic large ribosomal subunit"/>
    <property type="evidence" value="ECO:0007669"/>
    <property type="project" value="TreeGrafter"/>
</dbReference>
<dbReference type="GO" id="GO:0019843">
    <property type="term" value="F:rRNA binding"/>
    <property type="evidence" value="ECO:0007669"/>
    <property type="project" value="UniProtKB-UniRule"/>
</dbReference>
<dbReference type="GO" id="GO:0003735">
    <property type="term" value="F:structural constituent of ribosome"/>
    <property type="evidence" value="ECO:0007669"/>
    <property type="project" value="InterPro"/>
</dbReference>
<dbReference type="GO" id="GO:0002181">
    <property type="term" value="P:cytoplasmic translation"/>
    <property type="evidence" value="ECO:0007669"/>
    <property type="project" value="TreeGrafter"/>
</dbReference>
<dbReference type="Gene3D" id="3.90.930.12">
    <property type="entry name" value="Ribosomal protein L6, alpha-beta domain"/>
    <property type="match status" value="2"/>
</dbReference>
<dbReference type="HAMAP" id="MF_01365_B">
    <property type="entry name" value="Ribosomal_uL6_B"/>
    <property type="match status" value="1"/>
</dbReference>
<dbReference type="InterPro" id="IPR000702">
    <property type="entry name" value="Ribosomal_uL6-like"/>
</dbReference>
<dbReference type="InterPro" id="IPR036789">
    <property type="entry name" value="Ribosomal_uL6-like_a/b-dom_sf"/>
</dbReference>
<dbReference type="InterPro" id="IPR020040">
    <property type="entry name" value="Ribosomal_uL6_a/b-dom"/>
</dbReference>
<dbReference type="InterPro" id="IPR019906">
    <property type="entry name" value="Ribosomal_uL6_bac-type"/>
</dbReference>
<dbReference type="InterPro" id="IPR002358">
    <property type="entry name" value="Ribosomal_uL6_CS"/>
</dbReference>
<dbReference type="NCBIfam" id="TIGR03654">
    <property type="entry name" value="L6_bact"/>
    <property type="match status" value="1"/>
</dbReference>
<dbReference type="PANTHER" id="PTHR11655">
    <property type="entry name" value="60S/50S RIBOSOMAL PROTEIN L6/L9"/>
    <property type="match status" value="1"/>
</dbReference>
<dbReference type="PANTHER" id="PTHR11655:SF14">
    <property type="entry name" value="LARGE RIBOSOMAL SUBUNIT PROTEIN UL6M"/>
    <property type="match status" value="1"/>
</dbReference>
<dbReference type="Pfam" id="PF00347">
    <property type="entry name" value="Ribosomal_L6"/>
    <property type="match status" value="2"/>
</dbReference>
<dbReference type="PIRSF" id="PIRSF002162">
    <property type="entry name" value="Ribosomal_L6"/>
    <property type="match status" value="1"/>
</dbReference>
<dbReference type="PRINTS" id="PR00059">
    <property type="entry name" value="RIBOSOMALL6"/>
</dbReference>
<dbReference type="SUPFAM" id="SSF56053">
    <property type="entry name" value="Ribosomal protein L6"/>
    <property type="match status" value="2"/>
</dbReference>
<dbReference type="PROSITE" id="PS00525">
    <property type="entry name" value="RIBOSOMAL_L6_1"/>
    <property type="match status" value="1"/>
</dbReference>
<gene>
    <name evidence="1" type="primary">rplF</name>
    <name evidence="1" type="synonym">rpl6</name>
</gene>
<protein>
    <recommendedName>
        <fullName evidence="1">Large ribosomal subunit protein uL6</fullName>
    </recommendedName>
    <alternativeName>
        <fullName evidence="3">50S ribosomal protein L6</fullName>
    </alternativeName>
</protein>
<feature type="chain" id="PRO_0000131035" description="Large ribosomal subunit protein uL6">
    <location>
        <begin position="1"/>
        <end position="187"/>
    </location>
</feature>
<feature type="region of interest" description="Disordered" evidence="2">
    <location>
        <begin position="159"/>
        <end position="187"/>
    </location>
</feature>
<accession>Q9ZI38</accession>
<name>RL6_AQUPY</name>
<sequence length="187" mass="21359">MSRLVKKPIPYPENVKVSYDEKEHKVTVEGPKGKLELNIHPDIKVTLNQQERWIKLDRPSDRSFHKAIHGTMAALIKNMIKGVTEGFTEILEIHGLGYRAQLKGNVLELHLGKSHPDIYPIPPDVKIEVKGNEIHIHGIDKQRVGQVAAEIRSFRKPDPYKGKGIRYKGEQLSSNPERLQVRSKEVR</sequence>
<comment type="function">
    <text evidence="1">This protein binds to the 23S rRNA, and is important in its secondary structure. It is located near the subunit interface in the base of the L7/L12 stalk, and near the tRNA binding site of the peptidyltransferase center.</text>
</comment>
<comment type="subunit">
    <text evidence="1">Part of the 50S ribosomal subunit.</text>
</comment>
<comment type="similarity">
    <text evidence="1">Belongs to the universal ribosomal protein uL6 family.</text>
</comment>
<comment type="sequence caution" evidence="3">
    <conflict type="frameshift">
        <sequence resource="EMBL-CDS" id="AAD08798"/>
    </conflict>
</comment>
<proteinExistence type="inferred from homology"/>
<evidence type="ECO:0000255" key="1">
    <source>
        <dbReference type="HAMAP-Rule" id="MF_01365"/>
    </source>
</evidence>
<evidence type="ECO:0000256" key="2">
    <source>
        <dbReference type="SAM" id="MobiDB-lite"/>
    </source>
</evidence>
<evidence type="ECO:0000305" key="3"/>